<reference key="1">
    <citation type="submission" date="2005-06" db="EMBL/GenBank/DDBJ databases">
        <title>DNA sequences of macaque genes expressed in brain or testis and its evolutionary implications.</title>
        <authorList>
            <consortium name="International consortium for macaque cDNA sequencing and analysis"/>
        </authorList>
    </citation>
    <scope>NUCLEOTIDE SEQUENCE [LARGE SCALE MRNA]</scope>
    <source>
        <tissue>Testis</tissue>
    </source>
</reference>
<protein>
    <recommendedName>
        <fullName>Metaxin-1</fullName>
    </recommendedName>
    <alternativeName>
        <fullName>Mitochondrial outer membrane import complex protein 1</fullName>
    </alternativeName>
</protein>
<proteinExistence type="evidence at transcript level"/>
<dbReference type="EMBL" id="AB179286">
    <property type="protein sequence ID" value="BAE02337.1"/>
    <property type="molecule type" value="mRNA"/>
</dbReference>
<dbReference type="RefSeq" id="NP_001272082.1">
    <property type="nucleotide sequence ID" value="NM_001285153.1"/>
</dbReference>
<dbReference type="SMR" id="Q4R3I0"/>
<dbReference type="STRING" id="9541.ENSMFAP00000024080"/>
<dbReference type="eggNOG" id="KOG3028">
    <property type="taxonomic scope" value="Eukaryota"/>
</dbReference>
<dbReference type="Proteomes" id="UP000233100">
    <property type="component" value="Unplaced"/>
</dbReference>
<dbReference type="GO" id="GO:0001401">
    <property type="term" value="C:SAM complex"/>
    <property type="evidence" value="ECO:0007669"/>
    <property type="project" value="InterPro"/>
</dbReference>
<dbReference type="GO" id="GO:0007005">
    <property type="term" value="P:mitochondrion organization"/>
    <property type="evidence" value="ECO:0007669"/>
    <property type="project" value="InterPro"/>
</dbReference>
<dbReference type="GO" id="GO:0015031">
    <property type="term" value="P:protein transport"/>
    <property type="evidence" value="ECO:0007669"/>
    <property type="project" value="UniProtKB-KW"/>
</dbReference>
<dbReference type="CDD" id="cd03212">
    <property type="entry name" value="GST_C_Metaxin1_3"/>
    <property type="match status" value="1"/>
</dbReference>
<dbReference type="CDD" id="cd03078">
    <property type="entry name" value="GST_N_Metaxin1_like"/>
    <property type="match status" value="1"/>
</dbReference>
<dbReference type="Gene3D" id="1.20.1050.10">
    <property type="match status" value="1"/>
</dbReference>
<dbReference type="InterPro" id="IPR036282">
    <property type="entry name" value="Glutathione-S-Trfase_C_sf"/>
</dbReference>
<dbReference type="InterPro" id="IPR040079">
    <property type="entry name" value="Glutathione_S-Trfase"/>
</dbReference>
<dbReference type="InterPro" id="IPR017410">
    <property type="entry name" value="Metaxin1/3"/>
</dbReference>
<dbReference type="InterPro" id="IPR033468">
    <property type="entry name" value="Metaxin_GST"/>
</dbReference>
<dbReference type="InterPro" id="IPR050931">
    <property type="entry name" value="Mito_Protein_Transport_Metaxin"/>
</dbReference>
<dbReference type="InterPro" id="IPR019564">
    <property type="entry name" value="Sam37/metaxin_N"/>
</dbReference>
<dbReference type="PANTHER" id="PTHR12289">
    <property type="entry name" value="METAXIN RELATED"/>
    <property type="match status" value="1"/>
</dbReference>
<dbReference type="PANTHER" id="PTHR12289:SF34">
    <property type="entry name" value="METAXIN-1"/>
    <property type="match status" value="1"/>
</dbReference>
<dbReference type="Pfam" id="PF17171">
    <property type="entry name" value="GST_C_6"/>
    <property type="match status" value="1"/>
</dbReference>
<dbReference type="Pfam" id="PF10568">
    <property type="entry name" value="Tom37"/>
    <property type="match status" value="1"/>
</dbReference>
<dbReference type="PIRSF" id="PIRSF038150">
    <property type="entry name" value="Metaxin"/>
    <property type="match status" value="1"/>
</dbReference>
<dbReference type="SFLD" id="SFLDS00019">
    <property type="entry name" value="Glutathione_Transferase_(cytos"/>
    <property type="match status" value="1"/>
</dbReference>
<dbReference type="SFLD" id="SFLDG01180">
    <property type="entry name" value="SUF1"/>
    <property type="match status" value="1"/>
</dbReference>
<dbReference type="SUPFAM" id="SSF47616">
    <property type="entry name" value="GST C-terminal domain-like"/>
    <property type="match status" value="1"/>
</dbReference>
<evidence type="ECO:0000250" key="1"/>
<evidence type="ECO:0000250" key="2">
    <source>
        <dbReference type="UniProtKB" id="Q13505"/>
    </source>
</evidence>
<evidence type="ECO:0000255" key="3"/>
<evidence type="ECO:0000305" key="4"/>
<sequence>MAAPMELFCWSGGWGLPSVDLDSLAVLTYARFTGAPLKVHKISNPWRSPSGTLPALRTSHGEVISVPHKIITHLRKEKYNADYDLSARQGADTLAFMSLLEEKLLPVLVHTFWIDTKNYVEVTRKWYAEAMPFPLNFFLPGRMQRQYMERLELLSGEHMPEDEEELEKELYREARECLTLLSQRLGSQKFFFGDAPASLDAFVFSYLALLLQAKLPSGKLQAHLRGLHNLCAYCTHILSLYFPWDGAEVPPPRQTPAGPETEEEPYRRRNQILSVLAGLAAMVGYALLSGIVSIQRATPARAPGTRALGMAEEDEEE</sequence>
<name>MTX1_MACFA</name>
<keyword id="KW-1017">Isopeptide bond</keyword>
<keyword id="KW-0472">Membrane</keyword>
<keyword id="KW-0496">Mitochondrion</keyword>
<keyword id="KW-1000">Mitochondrion outer membrane</keyword>
<keyword id="KW-0653">Protein transport</keyword>
<keyword id="KW-1185">Reference proteome</keyword>
<keyword id="KW-0812">Transmembrane</keyword>
<keyword id="KW-1133">Transmembrane helix</keyword>
<keyword id="KW-0813">Transport</keyword>
<keyword id="KW-0832">Ubl conjugation</keyword>
<organism>
    <name type="scientific">Macaca fascicularis</name>
    <name type="common">Crab-eating macaque</name>
    <name type="synonym">Cynomolgus monkey</name>
    <dbReference type="NCBI Taxonomy" id="9541"/>
    <lineage>
        <taxon>Eukaryota</taxon>
        <taxon>Metazoa</taxon>
        <taxon>Chordata</taxon>
        <taxon>Craniata</taxon>
        <taxon>Vertebrata</taxon>
        <taxon>Euteleostomi</taxon>
        <taxon>Mammalia</taxon>
        <taxon>Eutheria</taxon>
        <taxon>Euarchontoglires</taxon>
        <taxon>Primates</taxon>
        <taxon>Haplorrhini</taxon>
        <taxon>Catarrhini</taxon>
        <taxon>Cercopithecidae</taxon>
        <taxon>Cercopithecinae</taxon>
        <taxon>Macaca</taxon>
    </lineage>
</organism>
<feature type="chain" id="PRO_0000320056" description="Metaxin-1">
    <location>
        <begin position="1"/>
        <end position="317"/>
    </location>
</feature>
<feature type="transmembrane region" description="Helical" evidence="3">
    <location>
        <begin position="164"/>
        <end position="184"/>
    </location>
</feature>
<feature type="cross-link" description="Glycyl lysine isopeptide (Lys-Gly) (interchain with G-Cter in ubiquitin)" evidence="2">
    <location>
        <position position="38"/>
    </location>
</feature>
<feature type="cross-link" description="Glycyl lysine isopeptide (Lys-Gly) (interchain with G-Cter in ubiquitin)" evidence="2">
    <location>
        <position position="41"/>
    </location>
</feature>
<feature type="cross-link" description="Glycyl lysine isopeptide (Lys-Gly) (interchain with G-Cter in ubiquitin)" evidence="2">
    <location>
        <position position="78"/>
    </location>
</feature>
<accession>Q4R3I0</accession>
<comment type="function">
    <text evidence="1">Involved in transport of proteins into the mitochondrion. Essential for embryonic development (By similarity).</text>
</comment>
<comment type="subunit">
    <text evidence="2">Interacts with MTX2/metaxin-2 (By similarity). Associates with the mitochondrial contact site and cristae organizing system (MICOS) complex, composed of at least MICOS10/MIC10, CHCHD3/MIC19, CHCHD6/MIC25, APOOL/MIC27, IMMT/MIC60, APOO/MIC23/MIC26 and QIL1/MIC13 (By similarity). This complex was also known under the names MINOS or MitOS complex (By similarity). The MICOS complex associates with mitochondrial outer membrane proteins SAMM50, MTX1 and MTX2 (together described as components of the mitochondrial outer membrane sorting assembly machinery (SAM) complex) and DNAJC11, mitochondrial inner membrane protein TMEM11 and with HSPA9 (By similarity). The MICOS and SAM complexes together with DNAJC11 are part of a large protein complex spanning both membranes termed the mitochondrial intermembrane space bridging (MIB) complex (By similarity). Interacts with ARMC1 (By similarity).</text>
</comment>
<comment type="subcellular location">
    <subcellularLocation>
        <location evidence="1">Mitochondrion outer membrane</location>
    </subcellularLocation>
</comment>
<comment type="PTM">
    <text evidence="2">Ubiquitinated by PRKN during mitophagy, leading to its degradation and enhancement of mitophagy. Deubiquitinated by USP30.</text>
</comment>
<comment type="similarity">
    <text evidence="4">Belongs to the metaxin family.</text>
</comment>
<gene>
    <name type="primary">MTX1</name>
    <name type="ORF">QtsA-16827</name>
</gene>